<accession>O74767</accession>
<sequence length="288" mass="31775">MFSWEASLSNELYFVRQYFYSGNYTKLFEIDTTSMSEKGLELTEIYMARAKLALGESLESIQSILTQKTPGSAAILALAGEGNMELIIDQHGNSDSVVQTLGAIFQIKNGSFDDAMDLLKKSVENLEAVALQVYIHLREHKIEAAEQTLKQALDWADEEIVLQLAQSWIKIVSGGVESYNDAFYVFEELNGTDSNPMTLTGMACADICLLRPEEALSSLKTALDSQPNYEEALSNMTTAITDLGPDAPSQAKNILSSFTNSSTLKLNDHLNEKAQEFDTFSTQFLSTA</sequence>
<name>COPE_SCHPO</name>
<protein>
    <recommendedName>
        <fullName>Probable coatomer subunit epsilon</fullName>
    </recommendedName>
    <alternativeName>
        <fullName>Epsilon-coat protein</fullName>
        <shortName>Epsilon-COP</shortName>
    </alternativeName>
</protein>
<feature type="chain" id="PRO_0000193855" description="Probable coatomer subunit epsilon">
    <location>
        <begin position="1"/>
        <end position="288"/>
    </location>
</feature>
<feature type="modified residue" description="Phosphoserine" evidence="2">
    <location>
        <position position="262"/>
    </location>
</feature>
<gene>
    <name type="primary">sec28</name>
    <name type="ORF">SPBC24C6.05</name>
</gene>
<proteinExistence type="evidence at protein level"/>
<comment type="function">
    <text evidence="1">The coatomer is a cytosolic protein complex that binds to dilysine motifs and reversibly associates with Golgi non-clathrin-coated vesicles, which further mediate biosynthetic protein transport from the ER, via the Golgi up to the trans Golgi network. The coatomer complex is required for budding from Golgi membranes, and is essential for the retrograde Golgi-to-ER transport of dilysine-tagged proteins (By similarity).</text>
</comment>
<comment type="subunit">
    <text evidence="1">Oligomeric complex that consists of at least the alpha, beta, beta', gamma, delta, epsilon and zeta subunits.</text>
</comment>
<comment type="subcellular location">
    <subcellularLocation>
        <location evidence="1">Cytoplasm</location>
    </subcellularLocation>
    <subcellularLocation>
        <location evidence="1">Golgi apparatus membrane</location>
        <topology evidence="1">Peripheral membrane protein</topology>
        <orientation evidence="1">Cytoplasmic side</orientation>
    </subcellularLocation>
    <subcellularLocation>
        <location evidence="1">Cytoplasmic vesicle</location>
        <location evidence="1">COPI-coated vesicle membrane</location>
        <topology evidence="1">Peripheral membrane protein</topology>
        <orientation evidence="1">Cytoplasmic side</orientation>
    </subcellularLocation>
    <text evidence="1">The coatomer is cytoplasmic or polymerized on the cytoplasmic side of the Golgi, as well as on the vesicles/buds originating from it.</text>
</comment>
<comment type="similarity">
    <text evidence="3">Belongs to the COPE family.</text>
</comment>
<keyword id="KW-0963">Cytoplasm</keyword>
<keyword id="KW-0968">Cytoplasmic vesicle</keyword>
<keyword id="KW-0931">ER-Golgi transport</keyword>
<keyword id="KW-0333">Golgi apparatus</keyword>
<keyword id="KW-0472">Membrane</keyword>
<keyword id="KW-0597">Phosphoprotein</keyword>
<keyword id="KW-0653">Protein transport</keyword>
<keyword id="KW-1185">Reference proteome</keyword>
<keyword id="KW-0813">Transport</keyword>
<organism>
    <name type="scientific">Schizosaccharomyces pombe (strain 972 / ATCC 24843)</name>
    <name type="common">Fission yeast</name>
    <dbReference type="NCBI Taxonomy" id="284812"/>
    <lineage>
        <taxon>Eukaryota</taxon>
        <taxon>Fungi</taxon>
        <taxon>Dikarya</taxon>
        <taxon>Ascomycota</taxon>
        <taxon>Taphrinomycotina</taxon>
        <taxon>Schizosaccharomycetes</taxon>
        <taxon>Schizosaccharomycetales</taxon>
        <taxon>Schizosaccharomycetaceae</taxon>
        <taxon>Schizosaccharomyces</taxon>
    </lineage>
</organism>
<dbReference type="EMBL" id="CU329671">
    <property type="protein sequence ID" value="CAA21149.1"/>
    <property type="molecule type" value="Genomic_DNA"/>
</dbReference>
<dbReference type="PIR" id="T39969">
    <property type="entry name" value="T39969"/>
</dbReference>
<dbReference type="RefSeq" id="NP_595959.1">
    <property type="nucleotide sequence ID" value="NM_001021868.2"/>
</dbReference>
<dbReference type="SMR" id="O74767"/>
<dbReference type="BioGRID" id="276847">
    <property type="interactions" value="100"/>
</dbReference>
<dbReference type="FunCoup" id="O74767">
    <property type="interactions" value="307"/>
</dbReference>
<dbReference type="STRING" id="284812.O74767"/>
<dbReference type="iPTMnet" id="O74767"/>
<dbReference type="PaxDb" id="4896-SPBC24C6.05.1"/>
<dbReference type="EnsemblFungi" id="SPBC24C6.05.1">
    <property type="protein sequence ID" value="SPBC24C6.05.1:pep"/>
    <property type="gene ID" value="SPBC24C6.05"/>
</dbReference>
<dbReference type="GeneID" id="2540317"/>
<dbReference type="KEGG" id="spo:2540317"/>
<dbReference type="PomBase" id="SPBC24C6.05">
    <property type="gene designation" value="sec28"/>
</dbReference>
<dbReference type="VEuPathDB" id="FungiDB:SPBC24C6.05"/>
<dbReference type="eggNOG" id="KOG3081">
    <property type="taxonomic scope" value="Eukaryota"/>
</dbReference>
<dbReference type="HOGENOM" id="CLU_966947_0_0_1"/>
<dbReference type="InParanoid" id="O74767"/>
<dbReference type="OMA" id="MIVLSQH"/>
<dbReference type="PhylomeDB" id="O74767"/>
<dbReference type="Reactome" id="R-SPO-6807878">
    <property type="pathway name" value="COPI-mediated anterograde transport"/>
</dbReference>
<dbReference type="Reactome" id="R-SPO-6811434">
    <property type="pathway name" value="COPI-dependent Golgi-to-ER retrograde traffic"/>
</dbReference>
<dbReference type="PRO" id="PR:O74767"/>
<dbReference type="Proteomes" id="UP000002485">
    <property type="component" value="Chromosome II"/>
</dbReference>
<dbReference type="GO" id="GO:0030126">
    <property type="term" value="C:COPI vesicle coat"/>
    <property type="evidence" value="ECO:0000318"/>
    <property type="project" value="GO_Central"/>
</dbReference>
<dbReference type="GO" id="GO:0005737">
    <property type="term" value="C:cytoplasm"/>
    <property type="evidence" value="ECO:0007005"/>
    <property type="project" value="PomBase"/>
</dbReference>
<dbReference type="GO" id="GO:0005829">
    <property type="term" value="C:cytosol"/>
    <property type="evidence" value="ECO:0007005"/>
    <property type="project" value="PomBase"/>
</dbReference>
<dbReference type="GO" id="GO:0000139">
    <property type="term" value="C:Golgi membrane"/>
    <property type="evidence" value="ECO:0007669"/>
    <property type="project" value="UniProtKB-SubCell"/>
</dbReference>
<dbReference type="GO" id="GO:0005198">
    <property type="term" value="F:structural molecule activity"/>
    <property type="evidence" value="ECO:0007669"/>
    <property type="project" value="InterPro"/>
</dbReference>
<dbReference type="GO" id="GO:0006888">
    <property type="term" value="P:endoplasmic reticulum to Golgi vesicle-mediated transport"/>
    <property type="evidence" value="ECO:0000318"/>
    <property type="project" value="GO_Central"/>
</dbReference>
<dbReference type="GO" id="GO:0006891">
    <property type="term" value="P:intra-Golgi vesicle-mediated transport"/>
    <property type="evidence" value="ECO:0000318"/>
    <property type="project" value="GO_Central"/>
</dbReference>
<dbReference type="GO" id="GO:0006886">
    <property type="term" value="P:intracellular protein transport"/>
    <property type="evidence" value="ECO:0000305"/>
    <property type="project" value="PomBase"/>
</dbReference>
<dbReference type="GO" id="GO:0032511">
    <property type="term" value="P:late endosome to vacuole transport via multivesicular body sorting pathway"/>
    <property type="evidence" value="ECO:0000266"/>
    <property type="project" value="PomBase"/>
</dbReference>
<dbReference type="GO" id="GO:0006890">
    <property type="term" value="P:retrograde vesicle-mediated transport, Golgi to endoplasmic reticulum"/>
    <property type="evidence" value="ECO:0007669"/>
    <property type="project" value="InterPro"/>
</dbReference>
<dbReference type="Gene3D" id="1.25.40.10">
    <property type="entry name" value="Tetratricopeptide repeat domain"/>
    <property type="match status" value="1"/>
</dbReference>
<dbReference type="InterPro" id="IPR006822">
    <property type="entry name" value="Coatomer_esu"/>
</dbReference>
<dbReference type="InterPro" id="IPR011990">
    <property type="entry name" value="TPR-like_helical_dom_sf"/>
</dbReference>
<dbReference type="PANTHER" id="PTHR10805">
    <property type="entry name" value="COATOMER SUBUNIT EPSILON"/>
    <property type="match status" value="1"/>
</dbReference>
<dbReference type="PANTHER" id="PTHR10805:SF0">
    <property type="entry name" value="COATOMER SUBUNIT EPSILON"/>
    <property type="match status" value="1"/>
</dbReference>
<dbReference type="Pfam" id="PF04733">
    <property type="entry name" value="Coatomer_E"/>
    <property type="match status" value="1"/>
</dbReference>
<dbReference type="PIRSF" id="PIRSF016478">
    <property type="entry name" value="Coatomer_esu"/>
    <property type="match status" value="1"/>
</dbReference>
<dbReference type="SUPFAM" id="SSF48452">
    <property type="entry name" value="TPR-like"/>
    <property type="match status" value="1"/>
</dbReference>
<evidence type="ECO:0000250" key="1"/>
<evidence type="ECO:0000269" key="2">
    <source>
    </source>
</evidence>
<evidence type="ECO:0000305" key="3"/>
<reference key="1">
    <citation type="journal article" date="2002" name="Nature">
        <title>The genome sequence of Schizosaccharomyces pombe.</title>
        <authorList>
            <person name="Wood V."/>
            <person name="Gwilliam R."/>
            <person name="Rajandream M.A."/>
            <person name="Lyne M.H."/>
            <person name="Lyne R."/>
            <person name="Stewart A."/>
            <person name="Sgouros J.G."/>
            <person name="Peat N."/>
            <person name="Hayles J."/>
            <person name="Baker S.G."/>
            <person name="Basham D."/>
            <person name="Bowman S."/>
            <person name="Brooks K."/>
            <person name="Brown D."/>
            <person name="Brown S."/>
            <person name="Chillingworth T."/>
            <person name="Churcher C.M."/>
            <person name="Collins M."/>
            <person name="Connor R."/>
            <person name="Cronin A."/>
            <person name="Davis P."/>
            <person name="Feltwell T."/>
            <person name="Fraser A."/>
            <person name="Gentles S."/>
            <person name="Goble A."/>
            <person name="Hamlin N."/>
            <person name="Harris D.E."/>
            <person name="Hidalgo J."/>
            <person name="Hodgson G."/>
            <person name="Holroyd S."/>
            <person name="Hornsby T."/>
            <person name="Howarth S."/>
            <person name="Huckle E.J."/>
            <person name="Hunt S."/>
            <person name="Jagels K."/>
            <person name="James K.D."/>
            <person name="Jones L."/>
            <person name="Jones M."/>
            <person name="Leather S."/>
            <person name="McDonald S."/>
            <person name="McLean J."/>
            <person name="Mooney P."/>
            <person name="Moule S."/>
            <person name="Mungall K.L."/>
            <person name="Murphy L.D."/>
            <person name="Niblett D."/>
            <person name="Odell C."/>
            <person name="Oliver K."/>
            <person name="O'Neil S."/>
            <person name="Pearson D."/>
            <person name="Quail M.A."/>
            <person name="Rabbinowitsch E."/>
            <person name="Rutherford K.M."/>
            <person name="Rutter S."/>
            <person name="Saunders D."/>
            <person name="Seeger K."/>
            <person name="Sharp S."/>
            <person name="Skelton J."/>
            <person name="Simmonds M.N."/>
            <person name="Squares R."/>
            <person name="Squares S."/>
            <person name="Stevens K."/>
            <person name="Taylor K."/>
            <person name="Taylor R.G."/>
            <person name="Tivey A."/>
            <person name="Walsh S.V."/>
            <person name="Warren T."/>
            <person name="Whitehead S."/>
            <person name="Woodward J.R."/>
            <person name="Volckaert G."/>
            <person name="Aert R."/>
            <person name="Robben J."/>
            <person name="Grymonprez B."/>
            <person name="Weltjens I."/>
            <person name="Vanstreels E."/>
            <person name="Rieger M."/>
            <person name="Schaefer M."/>
            <person name="Mueller-Auer S."/>
            <person name="Gabel C."/>
            <person name="Fuchs M."/>
            <person name="Duesterhoeft A."/>
            <person name="Fritzc C."/>
            <person name="Holzer E."/>
            <person name="Moestl D."/>
            <person name="Hilbert H."/>
            <person name="Borzym K."/>
            <person name="Langer I."/>
            <person name="Beck A."/>
            <person name="Lehrach H."/>
            <person name="Reinhardt R."/>
            <person name="Pohl T.M."/>
            <person name="Eger P."/>
            <person name="Zimmermann W."/>
            <person name="Wedler H."/>
            <person name="Wambutt R."/>
            <person name="Purnelle B."/>
            <person name="Goffeau A."/>
            <person name="Cadieu E."/>
            <person name="Dreano S."/>
            <person name="Gloux S."/>
            <person name="Lelaure V."/>
            <person name="Mottier S."/>
            <person name="Galibert F."/>
            <person name="Aves S.J."/>
            <person name="Xiang Z."/>
            <person name="Hunt C."/>
            <person name="Moore K."/>
            <person name="Hurst S.M."/>
            <person name="Lucas M."/>
            <person name="Rochet M."/>
            <person name="Gaillardin C."/>
            <person name="Tallada V.A."/>
            <person name="Garzon A."/>
            <person name="Thode G."/>
            <person name="Daga R.R."/>
            <person name="Cruzado L."/>
            <person name="Jimenez J."/>
            <person name="Sanchez M."/>
            <person name="del Rey F."/>
            <person name="Benito J."/>
            <person name="Dominguez A."/>
            <person name="Revuelta J.L."/>
            <person name="Moreno S."/>
            <person name="Armstrong J."/>
            <person name="Forsburg S.L."/>
            <person name="Cerutti L."/>
            <person name="Lowe T."/>
            <person name="McCombie W.R."/>
            <person name="Paulsen I."/>
            <person name="Potashkin J."/>
            <person name="Shpakovski G.V."/>
            <person name="Ussery D."/>
            <person name="Barrell B.G."/>
            <person name="Nurse P."/>
        </authorList>
    </citation>
    <scope>NUCLEOTIDE SEQUENCE [LARGE SCALE GENOMIC DNA]</scope>
    <source>
        <strain>972 / ATCC 24843</strain>
    </source>
</reference>
<reference key="2">
    <citation type="journal article" date="2008" name="J. Proteome Res.">
        <title>Phosphoproteome analysis of fission yeast.</title>
        <authorList>
            <person name="Wilson-Grady J.T."/>
            <person name="Villen J."/>
            <person name="Gygi S.P."/>
        </authorList>
    </citation>
    <scope>PHOSPHORYLATION [LARGE SCALE ANALYSIS] AT SER-262</scope>
    <scope>IDENTIFICATION BY MASS SPECTROMETRY</scope>
</reference>